<proteinExistence type="inferred from homology"/>
<evidence type="ECO:0000255" key="1">
    <source>
        <dbReference type="HAMAP-Rule" id="MF_01365"/>
    </source>
</evidence>
<evidence type="ECO:0000305" key="2"/>
<organism>
    <name type="scientific">Streptococcus agalactiae serotype Ia (strain ATCC 27591 / A909 / CDC SS700)</name>
    <dbReference type="NCBI Taxonomy" id="205921"/>
    <lineage>
        <taxon>Bacteria</taxon>
        <taxon>Bacillati</taxon>
        <taxon>Bacillota</taxon>
        <taxon>Bacilli</taxon>
        <taxon>Lactobacillales</taxon>
        <taxon>Streptococcaceae</taxon>
        <taxon>Streptococcus</taxon>
    </lineage>
</organism>
<reference key="1">
    <citation type="journal article" date="2005" name="Proc. Natl. Acad. Sci. U.S.A.">
        <title>Genome analysis of multiple pathogenic isolates of Streptococcus agalactiae: implications for the microbial 'pan-genome'.</title>
        <authorList>
            <person name="Tettelin H."/>
            <person name="Masignani V."/>
            <person name="Cieslewicz M.J."/>
            <person name="Donati C."/>
            <person name="Medini D."/>
            <person name="Ward N.L."/>
            <person name="Angiuoli S.V."/>
            <person name="Crabtree J."/>
            <person name="Jones A.L."/>
            <person name="Durkin A.S."/>
            <person name="DeBoy R.T."/>
            <person name="Davidsen T.M."/>
            <person name="Mora M."/>
            <person name="Scarselli M."/>
            <person name="Margarit y Ros I."/>
            <person name="Peterson J.D."/>
            <person name="Hauser C.R."/>
            <person name="Sundaram J.P."/>
            <person name="Nelson W.C."/>
            <person name="Madupu R."/>
            <person name="Brinkac L.M."/>
            <person name="Dodson R.J."/>
            <person name="Rosovitz M.J."/>
            <person name="Sullivan S.A."/>
            <person name="Daugherty S.C."/>
            <person name="Haft D.H."/>
            <person name="Selengut J."/>
            <person name="Gwinn M.L."/>
            <person name="Zhou L."/>
            <person name="Zafar N."/>
            <person name="Khouri H."/>
            <person name="Radune D."/>
            <person name="Dimitrov G."/>
            <person name="Watkins K."/>
            <person name="O'Connor K.J."/>
            <person name="Smith S."/>
            <person name="Utterback T.R."/>
            <person name="White O."/>
            <person name="Rubens C.E."/>
            <person name="Grandi G."/>
            <person name="Madoff L.C."/>
            <person name="Kasper D.L."/>
            <person name="Telford J.L."/>
            <person name="Wessels M.R."/>
            <person name="Rappuoli R."/>
            <person name="Fraser C.M."/>
        </authorList>
    </citation>
    <scope>NUCLEOTIDE SEQUENCE [LARGE SCALE GENOMIC DNA]</scope>
    <source>
        <strain>ATCC 27591 / A909 / CDC SS700</strain>
    </source>
</reference>
<name>RL6_STRA1</name>
<gene>
    <name evidence="1" type="primary">rplF</name>
    <name type="ordered locus">SAK_0106</name>
</gene>
<protein>
    <recommendedName>
        <fullName evidence="1">Large ribosomal subunit protein uL6</fullName>
    </recommendedName>
    <alternativeName>
        <fullName evidence="2">50S ribosomal protein L6</fullName>
    </alternativeName>
</protein>
<sequence>MSRIGNKVITLPAGVEIINKDNVVTVKGPKGELTREFNKNIGITVEGTEVTVTRPNDSKEMKTIHGTTRANLNNMVVGVSEGFKKALEMRGVGYRAQLQGSKLVLSVGKSHQDEVEAPEGVTFEVPTPTTINVIGINKESVGQTAAYVRSLRSPEPYKGKGIRYVGEFVRRKEGKTGK</sequence>
<dbReference type="EMBL" id="CP000114">
    <property type="protein sequence ID" value="ABA45922.1"/>
    <property type="molecule type" value="Genomic_DNA"/>
</dbReference>
<dbReference type="RefSeq" id="WP_000086620.1">
    <property type="nucleotide sequence ID" value="NC_007432.1"/>
</dbReference>
<dbReference type="SMR" id="Q3K3V4"/>
<dbReference type="GeneID" id="66885033"/>
<dbReference type="KEGG" id="sak:SAK_0106"/>
<dbReference type="HOGENOM" id="CLU_065464_1_2_9"/>
<dbReference type="GO" id="GO:0022625">
    <property type="term" value="C:cytosolic large ribosomal subunit"/>
    <property type="evidence" value="ECO:0007669"/>
    <property type="project" value="TreeGrafter"/>
</dbReference>
<dbReference type="GO" id="GO:0019843">
    <property type="term" value="F:rRNA binding"/>
    <property type="evidence" value="ECO:0007669"/>
    <property type="project" value="UniProtKB-UniRule"/>
</dbReference>
<dbReference type="GO" id="GO:0003735">
    <property type="term" value="F:structural constituent of ribosome"/>
    <property type="evidence" value="ECO:0007669"/>
    <property type="project" value="InterPro"/>
</dbReference>
<dbReference type="GO" id="GO:0002181">
    <property type="term" value="P:cytoplasmic translation"/>
    <property type="evidence" value="ECO:0007669"/>
    <property type="project" value="TreeGrafter"/>
</dbReference>
<dbReference type="FunFam" id="3.90.930.12:FF:000001">
    <property type="entry name" value="50S ribosomal protein L6"/>
    <property type="match status" value="1"/>
</dbReference>
<dbReference type="FunFam" id="3.90.930.12:FF:000002">
    <property type="entry name" value="50S ribosomal protein L6"/>
    <property type="match status" value="1"/>
</dbReference>
<dbReference type="Gene3D" id="3.90.930.12">
    <property type="entry name" value="Ribosomal protein L6, alpha-beta domain"/>
    <property type="match status" value="2"/>
</dbReference>
<dbReference type="HAMAP" id="MF_01365_B">
    <property type="entry name" value="Ribosomal_uL6_B"/>
    <property type="match status" value="1"/>
</dbReference>
<dbReference type="InterPro" id="IPR000702">
    <property type="entry name" value="Ribosomal_uL6-like"/>
</dbReference>
<dbReference type="InterPro" id="IPR036789">
    <property type="entry name" value="Ribosomal_uL6-like_a/b-dom_sf"/>
</dbReference>
<dbReference type="InterPro" id="IPR020040">
    <property type="entry name" value="Ribosomal_uL6_a/b-dom"/>
</dbReference>
<dbReference type="InterPro" id="IPR019906">
    <property type="entry name" value="Ribosomal_uL6_bac-type"/>
</dbReference>
<dbReference type="InterPro" id="IPR002358">
    <property type="entry name" value="Ribosomal_uL6_CS"/>
</dbReference>
<dbReference type="NCBIfam" id="TIGR03654">
    <property type="entry name" value="L6_bact"/>
    <property type="match status" value="1"/>
</dbReference>
<dbReference type="PANTHER" id="PTHR11655">
    <property type="entry name" value="60S/50S RIBOSOMAL PROTEIN L6/L9"/>
    <property type="match status" value="1"/>
</dbReference>
<dbReference type="PANTHER" id="PTHR11655:SF14">
    <property type="entry name" value="LARGE RIBOSOMAL SUBUNIT PROTEIN UL6M"/>
    <property type="match status" value="1"/>
</dbReference>
<dbReference type="Pfam" id="PF00347">
    <property type="entry name" value="Ribosomal_L6"/>
    <property type="match status" value="2"/>
</dbReference>
<dbReference type="PIRSF" id="PIRSF002162">
    <property type="entry name" value="Ribosomal_L6"/>
    <property type="match status" value="1"/>
</dbReference>
<dbReference type="PRINTS" id="PR00059">
    <property type="entry name" value="RIBOSOMALL6"/>
</dbReference>
<dbReference type="SUPFAM" id="SSF56053">
    <property type="entry name" value="Ribosomal protein L6"/>
    <property type="match status" value="2"/>
</dbReference>
<dbReference type="PROSITE" id="PS00525">
    <property type="entry name" value="RIBOSOMAL_L6_1"/>
    <property type="match status" value="1"/>
</dbReference>
<feature type="chain" id="PRO_0000260940" description="Large ribosomal subunit protein uL6">
    <location>
        <begin position="1"/>
        <end position="178"/>
    </location>
</feature>
<keyword id="KW-0687">Ribonucleoprotein</keyword>
<keyword id="KW-0689">Ribosomal protein</keyword>
<keyword id="KW-0694">RNA-binding</keyword>
<keyword id="KW-0699">rRNA-binding</keyword>
<comment type="function">
    <text evidence="1">This protein binds to the 23S rRNA, and is important in its secondary structure. It is located near the subunit interface in the base of the L7/L12 stalk, and near the tRNA binding site of the peptidyltransferase center.</text>
</comment>
<comment type="subunit">
    <text evidence="1">Part of the 50S ribosomal subunit.</text>
</comment>
<comment type="similarity">
    <text evidence="1">Belongs to the universal ribosomal protein uL6 family.</text>
</comment>
<accession>Q3K3V4</accession>